<reference key="1">
    <citation type="submission" date="2006-09" db="EMBL/GenBank/DDBJ databases">
        <authorList>
            <consortium name="NIH - Mammalian Gene Collection (MGC) project"/>
        </authorList>
    </citation>
    <scope>NUCLEOTIDE SEQUENCE [LARGE SCALE MRNA]</scope>
    <source>
        <strain>Hereford</strain>
        <tissue>Fetal muscle</tissue>
    </source>
</reference>
<gene>
    <name type="primary">ARHGAP10</name>
</gene>
<comment type="function">
    <text evidence="2 3">GTPase-activating protein that catalyzes the conversion of active GTP-bound Rho GTPases to their inactive GDP-bound form, thus suppressing various Rho GTPase-mediated cellular processes (By similarity). Also converts Cdc42 to an inactive GDP-bound state (By similarity). Essential for PTKB2 regulation of cytoskeletal organization via Rho family GTPases (By similarity). Inhibits PAK2 proteolytic fragment PAK-2p34 kinase activity and changes its localization from the nucleus to the perinuclear region. Stabilizes PAK-2p34 thereby increasing stimulation of cell death (By similarity). Associates with MICAL1 on the endosomal membrane to promote Rab8-Rab10-dependent tubule extension. After dissociation with MICAL1, recruits WDR44 which connects the endoplasmic reticulum (ER) with the endosomal tubule, thereby participating in the export of a subset of neosynthesized proteins (By similarity).</text>
</comment>
<comment type="subunit">
    <text evidence="2 3">Interacts with PKN3 (By similarity). Interacts with caspase-activated PAK2 proteolytic fragment PAK-2p34; the interaction does not affect ARHGAP10 GTPase activation activity towards RHOA and CDC42 (By similarity). Interacts via its SH3 domain with PTK2/FAK1. Interacts with PTK2B/PYK2; the interaction negatively regulates ARHGAP10 GTPase-activating activity (By similarity). Interacts with MICAL1 and WDR44; complex formation might transit from GRAF2/ARHGAP10-MICAL1 to GRAF2/ARHGAP10-WDR44 complexes (By similarity).</text>
</comment>
<comment type="subcellular location">
    <subcellularLocation>
        <location evidence="1">Cytoplasm</location>
    </subcellularLocation>
    <subcellularLocation>
        <location evidence="1">Cytoplasm</location>
        <location evidence="1">Perinuclear region</location>
    </subcellularLocation>
    <subcellularLocation>
        <location evidence="1">Cell membrane</location>
    </subcellularLocation>
    <subcellularLocation>
        <location evidence="2">Endosome membrane</location>
    </subcellularLocation>
    <text evidence="1">Association to cell membrane is dependent on PH domain.</text>
</comment>
<comment type="domain">
    <text evidence="2">The BAR domain is important to associate RAB8A (or RAB8B) and RAB10 to endosomal membrane to promote tubule extension. The BAR domain is also important to recruit WDR44 to endosomal tubules.</text>
</comment>
<feature type="chain" id="PRO_0000304913" description="Rho GTPase-activating protein 10">
    <location>
        <begin position="1"/>
        <end position="785"/>
    </location>
</feature>
<feature type="domain" description="BAR">
    <location>
        <begin position="7"/>
        <end position="262"/>
    </location>
</feature>
<feature type="domain" description="PH" evidence="4">
    <location>
        <begin position="265"/>
        <end position="372"/>
    </location>
</feature>
<feature type="domain" description="Rho-GAP" evidence="5">
    <location>
        <begin position="389"/>
        <end position="574"/>
    </location>
</feature>
<feature type="domain" description="SH3" evidence="6">
    <location>
        <begin position="727"/>
        <end position="785"/>
    </location>
</feature>
<feature type="region of interest" description="Disordered" evidence="7">
    <location>
        <begin position="576"/>
        <end position="708"/>
    </location>
</feature>
<feature type="compositionally biased region" description="Pro residues" evidence="7">
    <location>
        <begin position="584"/>
        <end position="595"/>
    </location>
</feature>
<feature type="compositionally biased region" description="Basic residues" evidence="7">
    <location>
        <begin position="598"/>
        <end position="608"/>
    </location>
</feature>
<feature type="compositionally biased region" description="Basic and acidic residues" evidence="7">
    <location>
        <begin position="622"/>
        <end position="632"/>
    </location>
</feature>
<feature type="compositionally biased region" description="Low complexity" evidence="7">
    <location>
        <begin position="633"/>
        <end position="650"/>
    </location>
</feature>
<feature type="compositionally biased region" description="Polar residues" evidence="7">
    <location>
        <begin position="675"/>
        <end position="697"/>
    </location>
</feature>
<feature type="site" description="Arginine finger; crucial for GTP hydrolysis by stabilizing the transition state" evidence="5">
    <location>
        <position position="418"/>
    </location>
</feature>
<sequence>MGLQPLEFSDCYLDSPWFRERIRAHEAELERTNKFIKELIKDGKNLIAATKTLSAAQRKFAHSLRDFKFEFIGDAETDDERCIDASLREFSNFLKNLEEQREIMALSVTETLIKPLEKFRKEQLGAVKEEKKKFDKETERNYSLIDKHLNLSAKKKDSHLQEADIQVEQNRQHFYELSLEYVCKLQEIQERKKFEFVEPMLSFFQGMFTFYHQGHELAKDFNHYKMELQINIQNTRNRFEGTRSEVEELMNKIRQNPKDHKRASQFTAEGYLYVQEKRPPPFGSSWVKHYCMYRKAAKKFTMIPFEHRSGGKLGDGEVFFLKECIRRHTDSIDRRFCFDVEAADRPGISLTMQAFSEEERKQWLEVLGGKEALFPSFNRAIIPRPEGSAQLDKMGFTILRKCIRAVETRGINDQGLYRVVGVSSKVQRLLSMLMDVKTCNEVDLENSVDWEVKTITSALKQYLRSLPEPLMTYELHGDFIVPAKSGSPESRVNAIHFLVHKLPEKNKEMLDILVKHLTNVSNHSKQNLMTVANLGVVFGPTLMRPQEETVAAIMDLKFQNIVVEILIENHEKIFRTPPDATLPEPGPLSAPPNAPPRQSKRQGQRTKRPVAVYNLCLELEDGDRPSLPKEDTPPSSLDSLSSPSPTTATALGHPGPDRNHLLTDGGSFGDWAPTAPSQARSSAVQWLNPQSPTTPSCSPAVTPPSPKLPPVPLSLPATVADKPPESIISRKARAVYPCEAEHSSELSFEIGAIFEDVQTSREPGWLEGTLNGKRGLIPQNYVKLL</sequence>
<proteinExistence type="evidence at transcript level"/>
<keyword id="KW-1003">Cell membrane</keyword>
<keyword id="KW-0963">Cytoplasm</keyword>
<keyword id="KW-0967">Endosome</keyword>
<keyword id="KW-0343">GTPase activation</keyword>
<keyword id="KW-0472">Membrane</keyword>
<keyword id="KW-1185">Reference proteome</keyword>
<keyword id="KW-0728">SH3 domain</keyword>
<evidence type="ECO:0000250" key="1"/>
<evidence type="ECO:0000250" key="2">
    <source>
        <dbReference type="UniProtKB" id="A1A4S6"/>
    </source>
</evidence>
<evidence type="ECO:0000250" key="3">
    <source>
        <dbReference type="UniProtKB" id="Q6Y5D8"/>
    </source>
</evidence>
<evidence type="ECO:0000255" key="4">
    <source>
        <dbReference type="PROSITE-ProRule" id="PRU00145"/>
    </source>
</evidence>
<evidence type="ECO:0000255" key="5">
    <source>
        <dbReference type="PROSITE-ProRule" id="PRU00172"/>
    </source>
</evidence>
<evidence type="ECO:0000255" key="6">
    <source>
        <dbReference type="PROSITE-ProRule" id="PRU00192"/>
    </source>
</evidence>
<evidence type="ECO:0000256" key="7">
    <source>
        <dbReference type="SAM" id="MobiDB-lite"/>
    </source>
</evidence>
<organism>
    <name type="scientific">Bos taurus</name>
    <name type="common">Bovine</name>
    <dbReference type="NCBI Taxonomy" id="9913"/>
    <lineage>
        <taxon>Eukaryota</taxon>
        <taxon>Metazoa</taxon>
        <taxon>Chordata</taxon>
        <taxon>Craniata</taxon>
        <taxon>Vertebrata</taxon>
        <taxon>Euteleostomi</taxon>
        <taxon>Mammalia</taxon>
        <taxon>Eutheria</taxon>
        <taxon>Laurasiatheria</taxon>
        <taxon>Artiodactyla</taxon>
        <taxon>Ruminantia</taxon>
        <taxon>Pecora</taxon>
        <taxon>Bovidae</taxon>
        <taxon>Bovinae</taxon>
        <taxon>Bos</taxon>
    </lineage>
</organism>
<accession>Q08DP6</accession>
<dbReference type="EMBL" id="BC123631">
    <property type="protein sequence ID" value="AAI23632.1"/>
    <property type="molecule type" value="mRNA"/>
</dbReference>
<dbReference type="RefSeq" id="NP_001070298.1">
    <property type="nucleotide sequence ID" value="NM_001076830.1"/>
</dbReference>
<dbReference type="BMRB" id="Q08DP6"/>
<dbReference type="SMR" id="Q08DP6"/>
<dbReference type="FunCoup" id="Q08DP6">
    <property type="interactions" value="1178"/>
</dbReference>
<dbReference type="STRING" id="9913.ENSBTAP00000064642"/>
<dbReference type="PaxDb" id="9913-ENSBTAP00000003283"/>
<dbReference type="GeneID" id="510704"/>
<dbReference type="KEGG" id="bta:510704"/>
<dbReference type="CTD" id="79658"/>
<dbReference type="VEuPathDB" id="HostDB:ENSBTAG00000002531"/>
<dbReference type="eggNOG" id="KOG1451">
    <property type="taxonomic scope" value="Eukaryota"/>
</dbReference>
<dbReference type="HOGENOM" id="CLU_011532_2_0_1"/>
<dbReference type="InParanoid" id="Q08DP6"/>
<dbReference type="OMA" id="MRSPMVQ"/>
<dbReference type="OrthoDB" id="3183924at2759"/>
<dbReference type="TreeFam" id="TF316851"/>
<dbReference type="Reactome" id="R-BTA-8980692">
    <property type="pathway name" value="RHOA GTPase cycle"/>
</dbReference>
<dbReference type="Reactome" id="R-BTA-9013148">
    <property type="pathway name" value="CDC42 GTPase cycle"/>
</dbReference>
<dbReference type="Reactome" id="R-BTA-9013149">
    <property type="pathway name" value="RAC1 GTPase cycle"/>
</dbReference>
<dbReference type="Proteomes" id="UP000009136">
    <property type="component" value="Chromosome 17"/>
</dbReference>
<dbReference type="Bgee" id="ENSBTAG00000002531">
    <property type="expression patterns" value="Expressed in myometrium and 106 other cell types or tissues"/>
</dbReference>
<dbReference type="GO" id="GO:0005829">
    <property type="term" value="C:cytosol"/>
    <property type="evidence" value="ECO:0000250"/>
    <property type="project" value="UniProtKB"/>
</dbReference>
<dbReference type="GO" id="GO:0010008">
    <property type="term" value="C:endosome membrane"/>
    <property type="evidence" value="ECO:0000250"/>
    <property type="project" value="UniProtKB"/>
</dbReference>
<dbReference type="GO" id="GO:0048471">
    <property type="term" value="C:perinuclear region of cytoplasm"/>
    <property type="evidence" value="ECO:0007669"/>
    <property type="project" value="UniProtKB-SubCell"/>
</dbReference>
<dbReference type="GO" id="GO:0005886">
    <property type="term" value="C:plasma membrane"/>
    <property type="evidence" value="ECO:0007669"/>
    <property type="project" value="UniProtKB-SubCell"/>
</dbReference>
<dbReference type="GO" id="GO:0005096">
    <property type="term" value="F:GTPase activator activity"/>
    <property type="evidence" value="ECO:0000318"/>
    <property type="project" value="GO_Central"/>
</dbReference>
<dbReference type="GO" id="GO:0007010">
    <property type="term" value="P:cytoskeleton organization"/>
    <property type="evidence" value="ECO:0000318"/>
    <property type="project" value="GO_Central"/>
</dbReference>
<dbReference type="GO" id="GO:0043066">
    <property type="term" value="P:negative regulation of apoptotic process"/>
    <property type="evidence" value="ECO:0000318"/>
    <property type="project" value="GO_Central"/>
</dbReference>
<dbReference type="GO" id="GO:0007165">
    <property type="term" value="P:signal transduction"/>
    <property type="evidence" value="ECO:0007669"/>
    <property type="project" value="InterPro"/>
</dbReference>
<dbReference type="CDD" id="cd01249">
    <property type="entry name" value="BAR-PH_GRAF_family"/>
    <property type="match status" value="1"/>
</dbReference>
<dbReference type="CDD" id="cd07635">
    <property type="entry name" value="BAR_GRAF2"/>
    <property type="match status" value="1"/>
</dbReference>
<dbReference type="CDD" id="cd04374">
    <property type="entry name" value="RhoGAP_Graf"/>
    <property type="match status" value="1"/>
</dbReference>
<dbReference type="CDD" id="cd12065">
    <property type="entry name" value="SH3_GRAF2"/>
    <property type="match status" value="1"/>
</dbReference>
<dbReference type="FunFam" id="2.30.29.30:FF:000157">
    <property type="entry name" value="Putative rho GTPase-activating protein 10"/>
    <property type="match status" value="1"/>
</dbReference>
<dbReference type="FunFam" id="1.10.555.10:FF:000006">
    <property type="entry name" value="Rho GTPase activating protein 26"/>
    <property type="match status" value="1"/>
</dbReference>
<dbReference type="FunFam" id="1.20.1270.60:FF:000001">
    <property type="entry name" value="Rho GTPase-activating protein 26"/>
    <property type="match status" value="1"/>
</dbReference>
<dbReference type="FunFam" id="2.30.30.40:FF:000055">
    <property type="entry name" value="rho GTPase-activating protein 26 isoform X1"/>
    <property type="match status" value="1"/>
</dbReference>
<dbReference type="Gene3D" id="1.20.1270.60">
    <property type="entry name" value="Arfaptin homology (AH) domain/BAR domain"/>
    <property type="match status" value="1"/>
</dbReference>
<dbReference type="Gene3D" id="2.30.29.30">
    <property type="entry name" value="Pleckstrin-homology domain (PH domain)/Phosphotyrosine-binding domain (PTB)"/>
    <property type="match status" value="1"/>
</dbReference>
<dbReference type="Gene3D" id="1.10.555.10">
    <property type="entry name" value="Rho GTPase activation protein"/>
    <property type="match status" value="1"/>
</dbReference>
<dbReference type="Gene3D" id="2.30.30.40">
    <property type="entry name" value="SH3 Domains"/>
    <property type="match status" value="1"/>
</dbReference>
<dbReference type="InterPro" id="IPR027267">
    <property type="entry name" value="AH/BAR_dom_sf"/>
</dbReference>
<dbReference type="InterPro" id="IPR004148">
    <property type="entry name" value="BAR_dom"/>
</dbReference>
<dbReference type="InterPro" id="IPR035485">
    <property type="entry name" value="GRAF2_SH3"/>
</dbReference>
<dbReference type="InterPro" id="IPR047234">
    <property type="entry name" value="GRAF_fam"/>
</dbReference>
<dbReference type="InterPro" id="IPR011993">
    <property type="entry name" value="PH-like_dom_sf"/>
</dbReference>
<dbReference type="InterPro" id="IPR001849">
    <property type="entry name" value="PH_domain"/>
</dbReference>
<dbReference type="InterPro" id="IPR047225">
    <property type="entry name" value="PH_GRAF"/>
</dbReference>
<dbReference type="InterPro" id="IPR008936">
    <property type="entry name" value="Rho_GTPase_activation_prot"/>
</dbReference>
<dbReference type="InterPro" id="IPR000198">
    <property type="entry name" value="RhoGAP_dom"/>
</dbReference>
<dbReference type="InterPro" id="IPR036028">
    <property type="entry name" value="SH3-like_dom_sf"/>
</dbReference>
<dbReference type="InterPro" id="IPR001452">
    <property type="entry name" value="SH3_domain"/>
</dbReference>
<dbReference type="PANTHER" id="PTHR12552">
    <property type="entry name" value="OLIGOPHRENIN 1"/>
    <property type="match status" value="1"/>
</dbReference>
<dbReference type="PANTHER" id="PTHR12552:SF5">
    <property type="entry name" value="RHO GTPASE-ACTIVATING PROTEIN 10"/>
    <property type="match status" value="1"/>
</dbReference>
<dbReference type="Pfam" id="PF16746">
    <property type="entry name" value="BAR_3"/>
    <property type="match status" value="1"/>
</dbReference>
<dbReference type="Pfam" id="PF00169">
    <property type="entry name" value="PH"/>
    <property type="match status" value="1"/>
</dbReference>
<dbReference type="Pfam" id="PF00620">
    <property type="entry name" value="RhoGAP"/>
    <property type="match status" value="1"/>
</dbReference>
<dbReference type="Pfam" id="PF14604">
    <property type="entry name" value="SH3_9"/>
    <property type="match status" value="1"/>
</dbReference>
<dbReference type="SMART" id="SM00233">
    <property type="entry name" value="PH"/>
    <property type="match status" value="1"/>
</dbReference>
<dbReference type="SMART" id="SM00324">
    <property type="entry name" value="RhoGAP"/>
    <property type="match status" value="1"/>
</dbReference>
<dbReference type="SMART" id="SM00326">
    <property type="entry name" value="SH3"/>
    <property type="match status" value="1"/>
</dbReference>
<dbReference type="SUPFAM" id="SSF103657">
    <property type="entry name" value="BAR/IMD domain-like"/>
    <property type="match status" value="1"/>
</dbReference>
<dbReference type="SUPFAM" id="SSF48350">
    <property type="entry name" value="GTPase activation domain, GAP"/>
    <property type="match status" value="1"/>
</dbReference>
<dbReference type="SUPFAM" id="SSF50729">
    <property type="entry name" value="PH domain-like"/>
    <property type="match status" value="1"/>
</dbReference>
<dbReference type="SUPFAM" id="SSF50044">
    <property type="entry name" value="SH3-domain"/>
    <property type="match status" value="1"/>
</dbReference>
<dbReference type="PROSITE" id="PS50003">
    <property type="entry name" value="PH_DOMAIN"/>
    <property type="match status" value="1"/>
</dbReference>
<dbReference type="PROSITE" id="PS50238">
    <property type="entry name" value="RHOGAP"/>
    <property type="match status" value="1"/>
</dbReference>
<dbReference type="PROSITE" id="PS50002">
    <property type="entry name" value="SH3"/>
    <property type="match status" value="1"/>
</dbReference>
<name>RHG10_BOVIN</name>
<protein>
    <recommendedName>
        <fullName>Rho GTPase-activating protein 10</fullName>
    </recommendedName>
    <alternativeName>
        <fullName>Rho-type GTPase-activating protein 10</fullName>
    </alternativeName>
</protein>